<accession>Q749X2</accession>
<organism>
    <name type="scientific">Geobacter sulfurreducens (strain ATCC 51573 / DSM 12127 / PCA)</name>
    <dbReference type="NCBI Taxonomy" id="243231"/>
    <lineage>
        <taxon>Bacteria</taxon>
        <taxon>Pseudomonadati</taxon>
        <taxon>Thermodesulfobacteriota</taxon>
        <taxon>Desulfuromonadia</taxon>
        <taxon>Geobacterales</taxon>
        <taxon>Geobacteraceae</taxon>
        <taxon>Geobacter</taxon>
    </lineage>
</organism>
<comment type="function">
    <text evidence="1">Transfers and isomerizes the ribose moiety from AdoMet to the 7-aminomethyl group of 7-deazaguanine (preQ1-tRNA) to give epoxyqueuosine (oQ-tRNA).</text>
</comment>
<comment type="catalytic activity">
    <reaction evidence="1">
        <text>7-aminomethyl-7-carbaguanosine(34) in tRNA + S-adenosyl-L-methionine = epoxyqueuosine(34) in tRNA + adenine + L-methionine + 2 H(+)</text>
        <dbReference type="Rhea" id="RHEA:32155"/>
        <dbReference type="Rhea" id="RHEA-COMP:10342"/>
        <dbReference type="Rhea" id="RHEA-COMP:18582"/>
        <dbReference type="ChEBI" id="CHEBI:15378"/>
        <dbReference type="ChEBI" id="CHEBI:16708"/>
        <dbReference type="ChEBI" id="CHEBI:57844"/>
        <dbReference type="ChEBI" id="CHEBI:59789"/>
        <dbReference type="ChEBI" id="CHEBI:82833"/>
        <dbReference type="ChEBI" id="CHEBI:194443"/>
        <dbReference type="EC" id="2.4.99.17"/>
    </reaction>
</comment>
<comment type="pathway">
    <text evidence="1">tRNA modification; tRNA-queuosine biosynthesis.</text>
</comment>
<comment type="subunit">
    <text evidence="1">Monomer.</text>
</comment>
<comment type="subcellular location">
    <subcellularLocation>
        <location evidence="1">Cytoplasm</location>
    </subcellularLocation>
</comment>
<comment type="similarity">
    <text evidence="1">Belongs to the QueA family.</text>
</comment>
<feature type="chain" id="PRO_0000231340" description="S-adenosylmethionine:tRNA ribosyltransferase-isomerase">
    <location>
        <begin position="1"/>
        <end position="343"/>
    </location>
</feature>
<keyword id="KW-0963">Cytoplasm</keyword>
<keyword id="KW-0671">Queuosine biosynthesis</keyword>
<keyword id="KW-1185">Reference proteome</keyword>
<keyword id="KW-0949">S-adenosyl-L-methionine</keyword>
<keyword id="KW-0808">Transferase</keyword>
<evidence type="ECO:0000255" key="1">
    <source>
        <dbReference type="HAMAP-Rule" id="MF_00113"/>
    </source>
</evidence>
<name>QUEA_GEOSL</name>
<protein>
    <recommendedName>
        <fullName evidence="1">S-adenosylmethionine:tRNA ribosyltransferase-isomerase</fullName>
        <ecNumber evidence="1">2.4.99.17</ecNumber>
    </recommendedName>
    <alternativeName>
        <fullName evidence="1">Queuosine biosynthesis protein QueA</fullName>
    </alternativeName>
</protein>
<reference key="1">
    <citation type="journal article" date="2003" name="Science">
        <title>Genome of Geobacter sulfurreducens: metal reduction in subsurface environments.</title>
        <authorList>
            <person name="Methe B.A."/>
            <person name="Nelson K.E."/>
            <person name="Eisen J.A."/>
            <person name="Paulsen I.T."/>
            <person name="Nelson W.C."/>
            <person name="Heidelberg J.F."/>
            <person name="Wu D."/>
            <person name="Wu M."/>
            <person name="Ward N.L."/>
            <person name="Beanan M.J."/>
            <person name="Dodson R.J."/>
            <person name="Madupu R."/>
            <person name="Brinkac L.M."/>
            <person name="Daugherty S.C."/>
            <person name="DeBoy R.T."/>
            <person name="Durkin A.S."/>
            <person name="Gwinn M.L."/>
            <person name="Kolonay J.F."/>
            <person name="Sullivan S.A."/>
            <person name="Haft D.H."/>
            <person name="Selengut J."/>
            <person name="Davidsen T.M."/>
            <person name="Zafar N."/>
            <person name="White O."/>
            <person name="Tran B."/>
            <person name="Romero C."/>
            <person name="Forberger H.A."/>
            <person name="Weidman J.F."/>
            <person name="Khouri H.M."/>
            <person name="Feldblyum T.V."/>
            <person name="Utterback T.R."/>
            <person name="Van Aken S.E."/>
            <person name="Lovley D.R."/>
            <person name="Fraser C.M."/>
        </authorList>
    </citation>
    <scope>NUCLEOTIDE SEQUENCE [LARGE SCALE GENOMIC DNA]</scope>
    <source>
        <strain>ATCC 51573 / DSM 12127 / PCA</strain>
    </source>
</reference>
<gene>
    <name evidence="1" type="primary">queA</name>
    <name type="ordered locus">GSU2620</name>
</gene>
<proteinExistence type="inferred from homology"/>
<sequence>MLVTEFDYHLPPELIAQEPLVQRDATRLMTVERDGGGIGEIPFRGIVDLFRPGDLLVINDTRVIPARLLGRKESGGKTEIFLVRRRPGDHETWHCLIRSSKPPRPGVTVLLPEGVRAVVREPGDGETWLVSFTPGEGFQEWLDRNGAMPLPPYIRREADAADRDRYQTVFARNRGAVAAPTAGLHMTAGLLDEIAGRGVRVAPVTLHVGLGTFMPIRVERLEDHRMHRERYHIPPATADAINGCRREGGRVIALGTTVCRTLEQAAAADGTIAAGEGEADIFIYPGYRFKAVDALITNFHLPKSTLLMLVSAFAGRDLLFRAYGEAVARRFRFFSYGDAMFIF</sequence>
<dbReference type="EC" id="2.4.99.17" evidence="1"/>
<dbReference type="EMBL" id="AE017180">
    <property type="protein sequence ID" value="AAR35992.1"/>
    <property type="molecule type" value="Genomic_DNA"/>
</dbReference>
<dbReference type="RefSeq" id="NP_953665.1">
    <property type="nucleotide sequence ID" value="NC_002939.5"/>
</dbReference>
<dbReference type="RefSeq" id="WP_010943258.1">
    <property type="nucleotide sequence ID" value="NC_002939.5"/>
</dbReference>
<dbReference type="SMR" id="Q749X2"/>
<dbReference type="FunCoup" id="Q749X2">
    <property type="interactions" value="466"/>
</dbReference>
<dbReference type="STRING" id="243231.GSU2620"/>
<dbReference type="EnsemblBacteria" id="AAR35992">
    <property type="protein sequence ID" value="AAR35992"/>
    <property type="gene ID" value="GSU2620"/>
</dbReference>
<dbReference type="KEGG" id="gsu:GSU2620"/>
<dbReference type="PATRIC" id="fig|243231.5.peg.2650"/>
<dbReference type="eggNOG" id="COG0809">
    <property type="taxonomic scope" value="Bacteria"/>
</dbReference>
<dbReference type="HOGENOM" id="CLU_039110_1_0_7"/>
<dbReference type="InParanoid" id="Q749X2"/>
<dbReference type="OrthoDB" id="9805933at2"/>
<dbReference type="UniPathway" id="UPA00392"/>
<dbReference type="Proteomes" id="UP000000577">
    <property type="component" value="Chromosome"/>
</dbReference>
<dbReference type="GO" id="GO:0005737">
    <property type="term" value="C:cytoplasm"/>
    <property type="evidence" value="ECO:0007669"/>
    <property type="project" value="UniProtKB-SubCell"/>
</dbReference>
<dbReference type="GO" id="GO:0051075">
    <property type="term" value="F:S-adenosylmethionine:tRNA ribosyltransferase-isomerase activity"/>
    <property type="evidence" value="ECO:0000318"/>
    <property type="project" value="GO_Central"/>
</dbReference>
<dbReference type="GO" id="GO:0008616">
    <property type="term" value="P:queuosine biosynthetic process"/>
    <property type="evidence" value="ECO:0000318"/>
    <property type="project" value="GO_Central"/>
</dbReference>
<dbReference type="GO" id="GO:0002099">
    <property type="term" value="P:tRNA wobble guanine modification"/>
    <property type="evidence" value="ECO:0000318"/>
    <property type="project" value="GO_Central"/>
</dbReference>
<dbReference type="FunFam" id="3.40.1780.10:FF:000001">
    <property type="entry name" value="S-adenosylmethionine:tRNA ribosyltransferase-isomerase"/>
    <property type="match status" value="1"/>
</dbReference>
<dbReference type="Gene3D" id="2.40.10.240">
    <property type="entry name" value="QueA-like"/>
    <property type="match status" value="1"/>
</dbReference>
<dbReference type="Gene3D" id="3.40.1780.10">
    <property type="entry name" value="QueA-like"/>
    <property type="match status" value="1"/>
</dbReference>
<dbReference type="HAMAP" id="MF_00113">
    <property type="entry name" value="QueA"/>
    <property type="match status" value="1"/>
</dbReference>
<dbReference type="InterPro" id="IPR003699">
    <property type="entry name" value="QueA"/>
</dbReference>
<dbReference type="InterPro" id="IPR042118">
    <property type="entry name" value="QueA_dom1"/>
</dbReference>
<dbReference type="InterPro" id="IPR042119">
    <property type="entry name" value="QueA_dom2"/>
</dbReference>
<dbReference type="InterPro" id="IPR036100">
    <property type="entry name" value="QueA_sf"/>
</dbReference>
<dbReference type="NCBIfam" id="NF001140">
    <property type="entry name" value="PRK00147.1"/>
    <property type="match status" value="1"/>
</dbReference>
<dbReference type="NCBIfam" id="TIGR00113">
    <property type="entry name" value="queA"/>
    <property type="match status" value="1"/>
</dbReference>
<dbReference type="PANTHER" id="PTHR30307">
    <property type="entry name" value="S-ADENOSYLMETHIONINE:TRNA RIBOSYLTRANSFERASE-ISOMERASE"/>
    <property type="match status" value="1"/>
</dbReference>
<dbReference type="PANTHER" id="PTHR30307:SF0">
    <property type="entry name" value="S-ADENOSYLMETHIONINE:TRNA RIBOSYLTRANSFERASE-ISOMERASE"/>
    <property type="match status" value="1"/>
</dbReference>
<dbReference type="Pfam" id="PF02547">
    <property type="entry name" value="Queuosine_synth"/>
    <property type="match status" value="1"/>
</dbReference>
<dbReference type="SUPFAM" id="SSF111337">
    <property type="entry name" value="QueA-like"/>
    <property type="match status" value="1"/>
</dbReference>